<gene>
    <name evidence="1" type="primary">rpsQ</name>
    <name type="ordered locus">BH0487</name>
</gene>
<accession>B2S0J0</accession>
<feature type="chain" id="PRO_1000143226" description="Small ribosomal subunit protein uS17">
    <location>
        <begin position="1"/>
        <end position="84"/>
    </location>
</feature>
<name>RS17_BORHD</name>
<protein>
    <recommendedName>
        <fullName evidence="1">Small ribosomal subunit protein uS17</fullName>
    </recommendedName>
    <alternativeName>
        <fullName evidence="2">30S ribosomal protein S17</fullName>
    </alternativeName>
</protein>
<sequence>MARENKKDLIGKVVSDKMSKTIVVEIVQRKMHPIYHKYLKVSRRVKAHDEREESRLGDKVRIIESRPISKEKRWMLVEILERSK</sequence>
<dbReference type="EMBL" id="CP000048">
    <property type="protein sequence ID" value="AAX16996.1"/>
    <property type="molecule type" value="Genomic_DNA"/>
</dbReference>
<dbReference type="RefSeq" id="WP_012422250.1">
    <property type="nucleotide sequence ID" value="NZ_CP073136.1"/>
</dbReference>
<dbReference type="SMR" id="B2S0J0"/>
<dbReference type="GeneID" id="71843305"/>
<dbReference type="KEGG" id="bhr:BH0487"/>
<dbReference type="HOGENOM" id="CLU_073626_1_0_12"/>
<dbReference type="Proteomes" id="UP000008834">
    <property type="component" value="Chromosome"/>
</dbReference>
<dbReference type="GO" id="GO:0022627">
    <property type="term" value="C:cytosolic small ribosomal subunit"/>
    <property type="evidence" value="ECO:0007669"/>
    <property type="project" value="TreeGrafter"/>
</dbReference>
<dbReference type="GO" id="GO:0019843">
    <property type="term" value="F:rRNA binding"/>
    <property type="evidence" value="ECO:0007669"/>
    <property type="project" value="UniProtKB-UniRule"/>
</dbReference>
<dbReference type="GO" id="GO:0003735">
    <property type="term" value="F:structural constituent of ribosome"/>
    <property type="evidence" value="ECO:0007669"/>
    <property type="project" value="InterPro"/>
</dbReference>
<dbReference type="GO" id="GO:0006412">
    <property type="term" value="P:translation"/>
    <property type="evidence" value="ECO:0007669"/>
    <property type="project" value="UniProtKB-UniRule"/>
</dbReference>
<dbReference type="CDD" id="cd00364">
    <property type="entry name" value="Ribosomal_uS17"/>
    <property type="match status" value="1"/>
</dbReference>
<dbReference type="Gene3D" id="2.40.50.140">
    <property type="entry name" value="Nucleic acid-binding proteins"/>
    <property type="match status" value="1"/>
</dbReference>
<dbReference type="HAMAP" id="MF_01345_B">
    <property type="entry name" value="Ribosomal_uS17_B"/>
    <property type="match status" value="1"/>
</dbReference>
<dbReference type="InterPro" id="IPR012340">
    <property type="entry name" value="NA-bd_OB-fold"/>
</dbReference>
<dbReference type="InterPro" id="IPR000266">
    <property type="entry name" value="Ribosomal_uS17"/>
</dbReference>
<dbReference type="InterPro" id="IPR019984">
    <property type="entry name" value="Ribosomal_uS17_bact/chlr"/>
</dbReference>
<dbReference type="InterPro" id="IPR019979">
    <property type="entry name" value="Ribosomal_uS17_CS"/>
</dbReference>
<dbReference type="NCBIfam" id="NF004123">
    <property type="entry name" value="PRK05610.1"/>
    <property type="match status" value="1"/>
</dbReference>
<dbReference type="NCBIfam" id="TIGR03635">
    <property type="entry name" value="uS17_bact"/>
    <property type="match status" value="1"/>
</dbReference>
<dbReference type="PANTHER" id="PTHR10744">
    <property type="entry name" value="40S RIBOSOMAL PROTEIN S11 FAMILY MEMBER"/>
    <property type="match status" value="1"/>
</dbReference>
<dbReference type="PANTHER" id="PTHR10744:SF1">
    <property type="entry name" value="SMALL RIBOSOMAL SUBUNIT PROTEIN US17M"/>
    <property type="match status" value="1"/>
</dbReference>
<dbReference type="Pfam" id="PF00366">
    <property type="entry name" value="Ribosomal_S17"/>
    <property type="match status" value="1"/>
</dbReference>
<dbReference type="PRINTS" id="PR00973">
    <property type="entry name" value="RIBOSOMALS17"/>
</dbReference>
<dbReference type="SUPFAM" id="SSF50249">
    <property type="entry name" value="Nucleic acid-binding proteins"/>
    <property type="match status" value="1"/>
</dbReference>
<dbReference type="PROSITE" id="PS00056">
    <property type="entry name" value="RIBOSOMAL_S17"/>
    <property type="match status" value="1"/>
</dbReference>
<evidence type="ECO:0000255" key="1">
    <source>
        <dbReference type="HAMAP-Rule" id="MF_01345"/>
    </source>
</evidence>
<evidence type="ECO:0000305" key="2"/>
<reference key="1">
    <citation type="submission" date="2004-12" db="EMBL/GenBank/DDBJ databases">
        <title>The genome sequence of Borrelia hermsii and Borrelia turicatae: comparative analysis of two agents of endemic N. America relapsing fever.</title>
        <authorList>
            <person name="Porcella S.F."/>
            <person name="Raffel S.J."/>
            <person name="Schrumpf M.E."/>
            <person name="Montgomery B."/>
            <person name="Smith T."/>
            <person name="Schwan T.G."/>
        </authorList>
    </citation>
    <scope>NUCLEOTIDE SEQUENCE [LARGE SCALE GENOMIC DNA]</scope>
    <source>
        <strain>HS1 / DAH</strain>
    </source>
</reference>
<comment type="function">
    <text evidence="1">One of the primary rRNA binding proteins, it binds specifically to the 5'-end of 16S ribosomal RNA.</text>
</comment>
<comment type="subunit">
    <text evidence="1">Part of the 30S ribosomal subunit.</text>
</comment>
<comment type="similarity">
    <text evidence="1">Belongs to the universal ribosomal protein uS17 family.</text>
</comment>
<organism>
    <name type="scientific">Borrelia hermsii (strain HS1 / DAH)</name>
    <dbReference type="NCBI Taxonomy" id="314723"/>
    <lineage>
        <taxon>Bacteria</taxon>
        <taxon>Pseudomonadati</taxon>
        <taxon>Spirochaetota</taxon>
        <taxon>Spirochaetia</taxon>
        <taxon>Spirochaetales</taxon>
        <taxon>Borreliaceae</taxon>
        <taxon>Borrelia</taxon>
    </lineage>
</organism>
<keyword id="KW-0687">Ribonucleoprotein</keyword>
<keyword id="KW-0689">Ribosomal protein</keyword>
<keyword id="KW-0694">RNA-binding</keyword>
<keyword id="KW-0699">rRNA-binding</keyword>
<proteinExistence type="inferred from homology"/>